<protein>
    <recommendedName>
        <fullName>Photosystem I reaction center subunit IV</fullName>
    </recommendedName>
</protein>
<evidence type="ECO:0000250" key="1"/>
<evidence type="ECO:0000305" key="2"/>
<sequence length="69" mass="7598">MAISRGAKVRIKRPESYWFNEVGTVASIDTSGIRYPVVVRFEKVNYTGIDGTDGGVNTNNFSEAELELA</sequence>
<keyword id="KW-0472">Membrane</keyword>
<keyword id="KW-0602">Photosynthesis</keyword>
<keyword id="KW-0603">Photosystem I</keyword>
<keyword id="KW-0793">Thylakoid</keyword>
<proteinExistence type="inferred from homology"/>
<feature type="chain" id="PRO_0000204412" description="Photosystem I reaction center subunit IV">
    <location>
        <begin position="1"/>
        <end position="69"/>
    </location>
</feature>
<reference key="1">
    <citation type="journal article" date="2003" name="Nature">
        <title>The genome of a motile marine Synechococcus.</title>
        <authorList>
            <person name="Palenik B."/>
            <person name="Brahamsha B."/>
            <person name="Larimer F.W."/>
            <person name="Land M.L."/>
            <person name="Hauser L."/>
            <person name="Chain P."/>
            <person name="Lamerdin J.E."/>
            <person name="Regala W."/>
            <person name="Allen E.E."/>
            <person name="McCarren J."/>
            <person name="Paulsen I.T."/>
            <person name="Dufresne A."/>
            <person name="Partensky F."/>
            <person name="Webb E.A."/>
            <person name="Waterbury J."/>
        </authorList>
    </citation>
    <scope>NUCLEOTIDE SEQUENCE [LARGE SCALE GENOMIC DNA]</scope>
    <source>
        <strain>WH8102</strain>
    </source>
</reference>
<comment type="function">
    <text evidence="1">Stabilizes the interaction between PsaC and the PSI core, assists the docking of the ferredoxin to PSI and interacts with ferredoxin-NADP oxidoreductase.</text>
</comment>
<comment type="subcellular location">
    <subcellularLocation>
        <location evidence="1">Cellular thylakoid membrane</location>
        <topology evidence="1">Peripheral membrane protein</topology>
    </subcellularLocation>
</comment>
<comment type="similarity">
    <text evidence="2">Belongs to the PsaE family.</text>
</comment>
<dbReference type="EMBL" id="BX569694">
    <property type="protein sequence ID" value="CAE08475.1"/>
    <property type="molecule type" value="Genomic_DNA"/>
</dbReference>
<dbReference type="RefSeq" id="WP_011128818.1">
    <property type="nucleotide sequence ID" value="NC_005070.1"/>
</dbReference>
<dbReference type="SMR" id="Q7U4V3"/>
<dbReference type="STRING" id="84588.SYNW1960"/>
<dbReference type="KEGG" id="syw:SYNW1960"/>
<dbReference type="eggNOG" id="ENOG503313D">
    <property type="taxonomic scope" value="Bacteria"/>
</dbReference>
<dbReference type="HOGENOM" id="CLU_136462_2_1_3"/>
<dbReference type="Proteomes" id="UP000001422">
    <property type="component" value="Chromosome"/>
</dbReference>
<dbReference type="GO" id="GO:0009538">
    <property type="term" value="C:photosystem I reaction center"/>
    <property type="evidence" value="ECO:0007669"/>
    <property type="project" value="InterPro"/>
</dbReference>
<dbReference type="GO" id="GO:0031676">
    <property type="term" value="C:plasma membrane-derived thylakoid membrane"/>
    <property type="evidence" value="ECO:0007669"/>
    <property type="project" value="UniProtKB-SubCell"/>
</dbReference>
<dbReference type="GO" id="GO:0015979">
    <property type="term" value="P:photosynthesis"/>
    <property type="evidence" value="ECO:0007669"/>
    <property type="project" value="UniProtKB-UniRule"/>
</dbReference>
<dbReference type="Gene3D" id="2.30.30.50">
    <property type="match status" value="1"/>
</dbReference>
<dbReference type="HAMAP" id="MF_00613">
    <property type="entry name" value="PSI_PsaE"/>
    <property type="match status" value="1"/>
</dbReference>
<dbReference type="InterPro" id="IPR008990">
    <property type="entry name" value="Elect_transpt_acc-like_dom_sf"/>
</dbReference>
<dbReference type="InterPro" id="IPR003375">
    <property type="entry name" value="PSI_PsaE"/>
</dbReference>
<dbReference type="NCBIfam" id="NF002745">
    <property type="entry name" value="PRK02749.1"/>
    <property type="match status" value="1"/>
</dbReference>
<dbReference type="PANTHER" id="PTHR34549">
    <property type="entry name" value="PHOTOSYSTEM I REACTION CENTER SUBUNIT IV A, CHLOROPLASTIC-RELATED"/>
    <property type="match status" value="1"/>
</dbReference>
<dbReference type="PANTHER" id="PTHR34549:SF2">
    <property type="entry name" value="PHOTOSYSTEM I SUBUNIT IV"/>
    <property type="match status" value="1"/>
</dbReference>
<dbReference type="Pfam" id="PF02427">
    <property type="entry name" value="PSI_PsaE"/>
    <property type="match status" value="1"/>
</dbReference>
<dbReference type="SUPFAM" id="SSF50090">
    <property type="entry name" value="Electron transport accessory proteins"/>
    <property type="match status" value="1"/>
</dbReference>
<name>PSAE_PARMW</name>
<gene>
    <name type="primary">psaE</name>
    <name type="ordered locus">SYNW1960</name>
</gene>
<organism>
    <name type="scientific">Parasynechococcus marenigrum (strain WH8102)</name>
    <dbReference type="NCBI Taxonomy" id="84588"/>
    <lineage>
        <taxon>Bacteria</taxon>
        <taxon>Bacillati</taxon>
        <taxon>Cyanobacteriota</taxon>
        <taxon>Cyanophyceae</taxon>
        <taxon>Synechococcales</taxon>
        <taxon>Prochlorococcaceae</taxon>
        <taxon>Parasynechococcus</taxon>
        <taxon>Parasynechococcus marenigrum</taxon>
    </lineage>
</organism>
<accession>Q7U4V3</accession>